<organism>
    <name type="scientific">Rattus norvegicus</name>
    <name type="common">Rat</name>
    <dbReference type="NCBI Taxonomy" id="10116"/>
    <lineage>
        <taxon>Eukaryota</taxon>
        <taxon>Metazoa</taxon>
        <taxon>Chordata</taxon>
        <taxon>Craniata</taxon>
        <taxon>Vertebrata</taxon>
        <taxon>Euteleostomi</taxon>
        <taxon>Mammalia</taxon>
        <taxon>Eutheria</taxon>
        <taxon>Euarchontoglires</taxon>
        <taxon>Glires</taxon>
        <taxon>Rodentia</taxon>
        <taxon>Myomorpha</taxon>
        <taxon>Muroidea</taxon>
        <taxon>Muridae</taxon>
        <taxon>Murinae</taxon>
        <taxon>Rattus</taxon>
    </lineage>
</organism>
<proteinExistence type="evidence at transcript level"/>
<sequence>MALLKVKFDQKKRVKLAQGLWLMNWLSVLAGIVLFSLGLFLKIELRKRSDVMDNSESHFVPNSLIGVGVLSCVFNSLAGKICYDALDPAKYAKWKPWLKLYLAVCVFFNVILFLVALCCFLLRGSLESTLAYGLKNGMKYYRDTDTPGRCFMKKTIDMLQIEFKCCGNNGFRDWFEIQWISNRYLDFSSKEVKDRIKSNVDGRYLVDGVPFSCCNPSSPRPCIQYQLTNNSAHYSYDHQTEELNLWLRGCRAALLNYYSSLMNSMGVVTLLIWLFEVSITAGLRFLHTALESVSNPEDPECESEGWLLENSVSETWKAFLESFKKLGKSNQVEAEAADAGQAPEAG</sequence>
<feature type="chain" id="PRO_0000168107" description="Peripherin-2">
    <location>
        <begin position="1"/>
        <end position="346"/>
    </location>
</feature>
<feature type="topological domain" description="Cytoplasmic" evidence="4">
    <location>
        <begin position="1"/>
        <end position="24"/>
    </location>
</feature>
<feature type="transmembrane region" description="Helical" evidence="4">
    <location>
        <begin position="25"/>
        <end position="43"/>
    </location>
</feature>
<feature type="topological domain" description="Lumenal" evidence="4">
    <location>
        <begin position="44"/>
        <end position="61"/>
    </location>
</feature>
<feature type="transmembrane region" description="Helical" evidence="4">
    <location>
        <begin position="62"/>
        <end position="80"/>
    </location>
</feature>
<feature type="topological domain" description="Cytoplasmic" evidence="4">
    <location>
        <begin position="81"/>
        <end position="99"/>
    </location>
</feature>
<feature type="transmembrane region" description="Helical" evidence="4">
    <location>
        <begin position="100"/>
        <end position="123"/>
    </location>
</feature>
<feature type="topological domain" description="Lumenal" evidence="4">
    <location>
        <begin position="124"/>
        <end position="264"/>
    </location>
</feature>
<feature type="transmembrane region" description="Helical" evidence="4">
    <location>
        <begin position="265"/>
        <end position="290"/>
    </location>
</feature>
<feature type="topological domain" description="Cytoplasmic" evidence="4">
    <location>
        <begin position="291"/>
        <end position="346"/>
    </location>
</feature>
<feature type="region of interest" description="Interaction with MREG" evidence="1">
    <location>
        <begin position="341"/>
        <end position="346"/>
    </location>
</feature>
<feature type="glycosylation site" description="N-linked (GlcNAc...) asparagine" evidence="4">
    <location>
        <position position="229"/>
    </location>
</feature>
<feature type="disulfide bond" description="Interchain (with ROM1)" evidence="2">
    <location>
        <position position="150"/>
    </location>
</feature>
<dbReference type="EMBL" id="X52376">
    <property type="protein sequence ID" value="CAA36603.1"/>
    <property type="molecule type" value="mRNA"/>
</dbReference>
<dbReference type="PIR" id="S10177">
    <property type="entry name" value="S10177"/>
</dbReference>
<dbReference type="RefSeq" id="NP_037153.1">
    <property type="nucleotide sequence ID" value="NM_013021.2"/>
</dbReference>
<dbReference type="SMR" id="P17438"/>
<dbReference type="FunCoup" id="P17438">
    <property type="interactions" value="5"/>
</dbReference>
<dbReference type="GlyCosmos" id="P17438">
    <property type="glycosylation" value="1 site, No reported glycans"/>
</dbReference>
<dbReference type="GlyGen" id="P17438">
    <property type="glycosylation" value="1 site"/>
</dbReference>
<dbReference type="PhosphoSitePlus" id="P17438"/>
<dbReference type="PaxDb" id="10116-ENSRNOP00000058218"/>
<dbReference type="Ensembl" id="ENSRNOT00000108165.1">
    <property type="protein sequence ID" value="ENSRNOP00000095739.1"/>
    <property type="gene ID" value="ENSRNOG00000068377.1"/>
</dbReference>
<dbReference type="GeneID" id="25534"/>
<dbReference type="KEGG" id="rno:25534"/>
<dbReference type="UCSC" id="RGD:3549">
    <property type="organism name" value="rat"/>
</dbReference>
<dbReference type="AGR" id="RGD:3549"/>
<dbReference type="CTD" id="5961"/>
<dbReference type="RGD" id="3549">
    <property type="gene designation" value="Prph2"/>
</dbReference>
<dbReference type="eggNOG" id="KOG3882">
    <property type="taxonomic scope" value="Eukaryota"/>
</dbReference>
<dbReference type="GeneTree" id="ENSGT00940000157303"/>
<dbReference type="InParanoid" id="P17438"/>
<dbReference type="OMA" id="LCCFLMR"/>
<dbReference type="OrthoDB" id="9836210at2759"/>
<dbReference type="PhylomeDB" id="P17438"/>
<dbReference type="PRO" id="PR:P17438"/>
<dbReference type="Proteomes" id="UP000002494">
    <property type="component" value="Chromosome 9"/>
</dbReference>
<dbReference type="GO" id="GO:0001917">
    <property type="term" value="C:photoreceptor inner segment"/>
    <property type="evidence" value="ECO:0007669"/>
    <property type="project" value="UniProtKB-SubCell"/>
</dbReference>
<dbReference type="GO" id="GO:0001750">
    <property type="term" value="C:photoreceptor outer segment"/>
    <property type="evidence" value="ECO:0000266"/>
    <property type="project" value="RGD"/>
</dbReference>
<dbReference type="GO" id="GO:0005886">
    <property type="term" value="C:plasma membrane"/>
    <property type="evidence" value="ECO:0000318"/>
    <property type="project" value="GO_Central"/>
</dbReference>
<dbReference type="GO" id="GO:0042803">
    <property type="term" value="F:protein homodimerization activity"/>
    <property type="evidence" value="ECO:0000266"/>
    <property type="project" value="RGD"/>
</dbReference>
<dbReference type="GO" id="GO:0007155">
    <property type="term" value="P:cell adhesion"/>
    <property type="evidence" value="ECO:0007669"/>
    <property type="project" value="UniProtKB-KW"/>
</dbReference>
<dbReference type="GO" id="GO:0050908">
    <property type="term" value="P:detection of light stimulus involved in visual perception"/>
    <property type="evidence" value="ECO:0000266"/>
    <property type="project" value="RGD"/>
</dbReference>
<dbReference type="GO" id="GO:0035845">
    <property type="term" value="P:photoreceptor cell outer segment organization"/>
    <property type="evidence" value="ECO:0000266"/>
    <property type="project" value="RGD"/>
</dbReference>
<dbReference type="GO" id="GO:0051291">
    <property type="term" value="P:protein heterooligomerization"/>
    <property type="evidence" value="ECO:0000266"/>
    <property type="project" value="RGD"/>
</dbReference>
<dbReference type="GO" id="GO:0051260">
    <property type="term" value="P:protein homooligomerization"/>
    <property type="evidence" value="ECO:0000266"/>
    <property type="project" value="RGD"/>
</dbReference>
<dbReference type="GO" id="GO:0072659">
    <property type="term" value="P:protein localization to plasma membrane"/>
    <property type="evidence" value="ECO:0000318"/>
    <property type="project" value="GO_Central"/>
</dbReference>
<dbReference type="GO" id="GO:0051604">
    <property type="term" value="P:protein maturation"/>
    <property type="evidence" value="ECO:0000318"/>
    <property type="project" value="GO_Central"/>
</dbReference>
<dbReference type="GO" id="GO:0009645">
    <property type="term" value="P:response to low light intensity stimulus"/>
    <property type="evidence" value="ECO:0000270"/>
    <property type="project" value="RGD"/>
</dbReference>
<dbReference type="GO" id="GO:0060041">
    <property type="term" value="P:retina development in camera-type eye"/>
    <property type="evidence" value="ECO:0000266"/>
    <property type="project" value="RGD"/>
</dbReference>
<dbReference type="CDD" id="cd03162">
    <property type="entry name" value="peripherin_like_LEL"/>
    <property type="match status" value="1"/>
</dbReference>
<dbReference type="FunFam" id="1.10.1450.10:FF:000002">
    <property type="entry name" value="Retinal outer segment membrane protein 1"/>
    <property type="match status" value="1"/>
</dbReference>
<dbReference type="Gene3D" id="1.10.1450.10">
    <property type="entry name" value="Tetraspanin"/>
    <property type="match status" value="1"/>
</dbReference>
<dbReference type="InterPro" id="IPR000830">
    <property type="entry name" value="Peripherin/rom-1"/>
</dbReference>
<dbReference type="InterPro" id="IPR018498">
    <property type="entry name" value="Peripherin/rom-1_CS"/>
</dbReference>
<dbReference type="InterPro" id="IPR042026">
    <property type="entry name" value="Peripherin_LEL"/>
</dbReference>
<dbReference type="InterPro" id="IPR018499">
    <property type="entry name" value="Tetraspanin/Peripherin"/>
</dbReference>
<dbReference type="InterPro" id="IPR008952">
    <property type="entry name" value="Tetraspanin_EC2_sf"/>
</dbReference>
<dbReference type="PANTHER" id="PTHR19282:SF202">
    <property type="entry name" value="PERIPHERIN-2"/>
    <property type="match status" value="1"/>
</dbReference>
<dbReference type="PANTHER" id="PTHR19282">
    <property type="entry name" value="TETRASPANIN"/>
    <property type="match status" value="1"/>
</dbReference>
<dbReference type="Pfam" id="PF00335">
    <property type="entry name" value="Tetraspanin"/>
    <property type="match status" value="1"/>
</dbReference>
<dbReference type="PRINTS" id="PR00218">
    <property type="entry name" value="PERIPHERNRDS"/>
</dbReference>
<dbReference type="SUPFAM" id="SSF48652">
    <property type="entry name" value="Tetraspanin"/>
    <property type="match status" value="1"/>
</dbReference>
<dbReference type="PROSITE" id="PS00930">
    <property type="entry name" value="RDS_ROM1"/>
    <property type="match status" value="1"/>
</dbReference>
<comment type="function">
    <text evidence="2">Essential for retina photoreceptor outer segment disk morphogenesis, may also play a role with ROM1 in the maintenance of outer segment disk structure (By similarity). Required for the maintenance of retinal outer nuclear layer thickness (By similarity). Required for the correct development and organization of the photoreceptor inner segment (By similarity).</text>
</comment>
<comment type="subunit">
    <text evidence="2 3">Homodimer; disulfide-linked (By similarity). Forms a homotetramer (By similarity). Forms a heterotetramer with ROM1 (By similarity). Homotetramer and heterotetramer core complexes go on to form higher order complexes by formation of intermolecular disulfide bonds (By similarity). Interacts with MREG (By similarity). Interacts with STX3 (By similarity). Interacts with SNAP25 (By similarity).</text>
</comment>
<comment type="subcellular location">
    <subcellularLocation>
        <location evidence="3">Membrane</location>
        <topology evidence="4">Multi-pass membrane protein</topology>
    </subcellularLocation>
    <subcellularLocation>
        <location evidence="2">Cell projection</location>
        <location evidence="2">Cilium</location>
        <location evidence="2">Photoreceptor outer segment</location>
    </subcellularLocation>
    <subcellularLocation>
        <location evidence="2">Photoreceptor inner segment</location>
    </subcellularLocation>
</comment>
<comment type="tissue specificity">
    <text>Retina (photoreceptor). In rim region of ROS (rod outer segment) disks.</text>
</comment>
<comment type="similarity">
    <text evidence="5">Belongs to the PRPH2/ROM1 family.</text>
</comment>
<accession>P17438</accession>
<protein>
    <recommendedName>
        <fullName>Peripherin-2</fullName>
    </recommendedName>
    <alternativeName>
        <fullName>Retinal degeneration slow protein</fullName>
    </alternativeName>
</protein>
<name>PRPH2_RAT</name>
<gene>
    <name type="primary">Prph2</name>
    <name type="synonym">Rds</name>
</gene>
<evidence type="ECO:0000250" key="1"/>
<evidence type="ECO:0000250" key="2">
    <source>
        <dbReference type="UniProtKB" id="P15499"/>
    </source>
</evidence>
<evidence type="ECO:0000250" key="3">
    <source>
        <dbReference type="UniProtKB" id="P17810"/>
    </source>
</evidence>
<evidence type="ECO:0000255" key="4"/>
<evidence type="ECO:0000305" key="5"/>
<keyword id="KW-0130">Cell adhesion</keyword>
<keyword id="KW-0966">Cell projection</keyword>
<keyword id="KW-1015">Disulfide bond</keyword>
<keyword id="KW-0325">Glycoprotein</keyword>
<keyword id="KW-0472">Membrane</keyword>
<keyword id="KW-1185">Reference proteome</keyword>
<keyword id="KW-0716">Sensory transduction</keyword>
<keyword id="KW-0812">Transmembrane</keyword>
<keyword id="KW-1133">Transmembrane helix</keyword>
<keyword id="KW-0844">Vision</keyword>
<reference key="1">
    <citation type="journal article" date="1990" name="Nucleic Acids Res.">
        <title>Nucleotide and predicted protein sequence of rat retinal degeneration slow (rds).</title>
        <authorList>
            <person name="Begy C.R."/>
            <person name="Bridges C.D."/>
        </authorList>
    </citation>
    <scope>NUCLEOTIDE SEQUENCE [MRNA]</scope>
    <source>
        <tissue>Retina</tissue>
    </source>
</reference>